<reference evidence="7" key="1">
    <citation type="submission" date="2024-03" db="UniProtKB">
        <authorList>
            <person name="Sreenivasulu Reddy B."/>
            <person name="Christina Mary M."/>
            <person name="Molly Mary T."/>
            <person name="Mahesh Padukudru A."/>
            <person name="Sathya B."/>
            <person name="Thirumurthy M."/>
            <person name="Vir Singh N."/>
        </authorList>
    </citation>
    <scope>PROTEIN SEQUENCE</scope>
    <scope>IDENTIFICATION BY MASS SPECTROMETRY</scope>
</reference>
<protein>
    <recommendedName>
        <fullName evidence="7">Pectinesterase</fullName>
        <ecNumber evidence="2">3.1.1.11</ecNumber>
    </recommendedName>
    <alternativeName>
        <fullName evidence="6">Pectinmethylesterase</fullName>
    </alternativeName>
</protein>
<comment type="function">
    <text evidence="2">Catalyzes the demethylesterification of homogalacturonan components of pectin.</text>
</comment>
<comment type="catalytic activity">
    <reaction evidence="2">
        <text>[(1-&gt;4)-alpha-D-galacturonosyl methyl ester](n) + n H2O = [(1-&gt;4)-alpha-D-galacturonosyl](n) + n methanol + n H(+)</text>
        <dbReference type="Rhea" id="RHEA:22380"/>
        <dbReference type="Rhea" id="RHEA-COMP:14570"/>
        <dbReference type="Rhea" id="RHEA-COMP:14573"/>
        <dbReference type="ChEBI" id="CHEBI:15377"/>
        <dbReference type="ChEBI" id="CHEBI:15378"/>
        <dbReference type="ChEBI" id="CHEBI:17790"/>
        <dbReference type="ChEBI" id="CHEBI:140522"/>
        <dbReference type="ChEBI" id="CHEBI:140523"/>
        <dbReference type="EC" id="3.1.1.11"/>
    </reaction>
</comment>
<comment type="pathway">
    <text evidence="2">Glycan metabolism; pectin degradation; 2-dehydro-3-deoxy-D-gluconate from pectin: step 1/5.</text>
</comment>
<comment type="subcellular location">
    <subcellularLocation>
        <location evidence="2">Secreted</location>
    </subcellularLocation>
</comment>
<comment type="mass spectrometry"/>
<comment type="similarity">
    <text evidence="7">Belongs to the pectinesterase family.</text>
</comment>
<feature type="signal peptide" evidence="3">
    <location>
        <begin position="1"/>
        <end position="22"/>
    </location>
</feature>
<feature type="chain" id="PRO_0000460693" description="Pectinesterase">
    <location>
        <begin position="23"/>
        <end position="364"/>
    </location>
</feature>
<feature type="active site" evidence="4">
    <location>
        <position position="220"/>
    </location>
</feature>
<feature type="glycosylation site" description="N-linked (GlcNAc...) asparagine" evidence="1">
    <location>
        <position position="103"/>
    </location>
</feature>
<proteinExistence type="evidence at protein level"/>
<name>PME_PARHY</name>
<organism evidence="5">
    <name type="scientific">Parthenium hysterophorus</name>
    <name type="common">Santa Maria feverfew</name>
    <dbReference type="NCBI Taxonomy" id="183063"/>
    <lineage>
        <taxon>Eukaryota</taxon>
        <taxon>Viridiplantae</taxon>
        <taxon>Streptophyta</taxon>
        <taxon>Embryophyta</taxon>
        <taxon>Tracheophyta</taxon>
        <taxon>Spermatophyta</taxon>
        <taxon>Magnoliopsida</taxon>
        <taxon>eudicotyledons</taxon>
        <taxon>Gunneridae</taxon>
        <taxon>Pentapetalae</taxon>
        <taxon>asterids</taxon>
        <taxon>campanulids</taxon>
        <taxon>Asterales</taxon>
        <taxon>Asteraceae</taxon>
        <taxon>Asteroideae</taxon>
        <taxon>Heliantheae alliance</taxon>
        <taxon>Heliantheae</taxon>
        <taxon>Parthenium</taxon>
    </lineage>
</organism>
<evidence type="ECO:0000250" key="1">
    <source>
        <dbReference type="UniProtKB" id="B2VPR8"/>
    </source>
</evidence>
<evidence type="ECO:0000250" key="2">
    <source>
        <dbReference type="UniProtKB" id="D8VPP5"/>
    </source>
</evidence>
<evidence type="ECO:0000255" key="3"/>
<evidence type="ECO:0000255" key="4">
    <source>
        <dbReference type="PROSITE-ProRule" id="PRU10040"/>
    </source>
</evidence>
<evidence type="ECO:0000269" key="5">
    <source ref="1"/>
</evidence>
<evidence type="ECO:0000303" key="6">
    <source ref="1"/>
</evidence>
<evidence type="ECO:0000305" key="7"/>
<dbReference type="EC" id="3.1.1.11" evidence="2"/>
<dbReference type="SMR" id="C0HMB4"/>
<dbReference type="UniPathway" id="UPA00545">
    <property type="reaction ID" value="UER00823"/>
</dbReference>
<dbReference type="GO" id="GO:0005576">
    <property type="term" value="C:extracellular region"/>
    <property type="evidence" value="ECO:0007669"/>
    <property type="project" value="UniProtKB-SubCell"/>
</dbReference>
<dbReference type="GO" id="GO:0030599">
    <property type="term" value="F:pectinesterase activity"/>
    <property type="evidence" value="ECO:0007669"/>
    <property type="project" value="InterPro"/>
</dbReference>
<dbReference type="GO" id="GO:0042545">
    <property type="term" value="P:cell wall modification"/>
    <property type="evidence" value="ECO:0007669"/>
    <property type="project" value="InterPro"/>
</dbReference>
<dbReference type="GO" id="GO:0045490">
    <property type="term" value="P:pectin catabolic process"/>
    <property type="evidence" value="ECO:0007669"/>
    <property type="project" value="TreeGrafter"/>
</dbReference>
<dbReference type="Gene3D" id="2.160.20.10">
    <property type="entry name" value="Single-stranded right-handed beta-helix, Pectin lyase-like"/>
    <property type="match status" value="1"/>
</dbReference>
<dbReference type="InterPro" id="IPR012334">
    <property type="entry name" value="Pectin_lyas_fold"/>
</dbReference>
<dbReference type="InterPro" id="IPR011050">
    <property type="entry name" value="Pectin_lyase_fold/virulence"/>
</dbReference>
<dbReference type="InterPro" id="IPR033131">
    <property type="entry name" value="Pectinesterase_Asp_AS"/>
</dbReference>
<dbReference type="InterPro" id="IPR000070">
    <property type="entry name" value="Pectinesterase_cat"/>
</dbReference>
<dbReference type="PANTHER" id="PTHR31321">
    <property type="entry name" value="ACYL-COA THIOESTER HYDROLASE YBHC-RELATED"/>
    <property type="match status" value="1"/>
</dbReference>
<dbReference type="PANTHER" id="PTHR31321:SF87">
    <property type="entry name" value="PECTINESTERASE 63-RELATED"/>
    <property type="match status" value="1"/>
</dbReference>
<dbReference type="Pfam" id="PF01095">
    <property type="entry name" value="Pectinesterase"/>
    <property type="match status" value="1"/>
</dbReference>
<dbReference type="SUPFAM" id="SSF51126">
    <property type="entry name" value="Pectin lyase-like"/>
    <property type="match status" value="1"/>
</dbReference>
<dbReference type="PROSITE" id="PS00503">
    <property type="entry name" value="PECTINESTERASE_2"/>
    <property type="match status" value="1"/>
</dbReference>
<keyword id="KW-0063">Aspartyl esterase</keyword>
<keyword id="KW-0903">Direct protein sequencing</keyword>
<keyword id="KW-0325">Glycoprotein</keyword>
<keyword id="KW-0378">Hydrolase</keyword>
<keyword id="KW-0964">Secreted</keyword>
<keyword id="KW-0732">Signal</keyword>
<sequence>MSCIAVEAVLLGILLYIPIVLSDDRAPIPANSAQLNSWFDGIIQPVAVRKATMDPALVTAEGQAKVIKLKSDGSGDFKSINEAIKSIPDDNTKRVILSFSPGNYSEKVKIGMYKHYITFYGEDPNNMPILVFGGTAAEYGTVDSATLIVESNYFSAVNLKIVNSAPRPDGKRVGAQAAALRISGDKASFYNVKIYGFQDTLCDDKGKHFYKDCYIEGTVDFIFGSGKSIFLNTELHAVPGDQPAIITAQARKTESEDTGYYFVNCRVTGGGAFLGRSWMPAAKVVFAYTEMGDAIHPEGWILVKPEHESTVRFPEYNNKGPGANMEKRAKFVKRLSDAEAKQSISLGSIEASKWLLPPRVVGLP</sequence>
<accession>C0HMB4</accession>